<comment type="function">
    <text evidence="1">Required during the early stages of meiosis for meiotic recombination.</text>
</comment>
<comment type="subunit">
    <text evidence="3">Homomer (PubMed:31665745). Interacts (via C-terminus) with hop1 (via C-terminus); the interaction is direct (PubMed:31665745). Interacts (via C-terminus) with rec10; the interaction is direct (PubMed:31665745). Interacts with mde2; the interaction is direct (PubMed:31665745).</text>
</comment>
<comment type="subcellular location">
    <subcellularLocation>
        <location evidence="1 2 3">Nucleus</location>
    </subcellularLocation>
    <subcellularLocation>
        <location evidence="3">Chromosome</location>
    </subcellularLocation>
    <text evidence="3">Localizes to meiotic chromosomal axis sites and DNA double-strand break (DSB) hotspots.</text>
</comment>
<comment type="disruption phenotype">
    <text evidence="3">Abolishes localization of hop1 to DNA double-strand break (DSB) hotspots.</text>
</comment>
<protein>
    <recommendedName>
        <fullName evidence="5">Meiotic recombination protein rec15</fullName>
    </recommendedName>
</protein>
<sequence>MSYSVSAAQLWSRKLAMQAEDMQQHQKSQSNQIASCLAEMNTKQEVVNQTIGQLGRSISEVQQQNSQLVLQSLNQINMSMQQVALGIQDYASRINKLEQTMSDMNLKFEALQKEQNSNTKTLADCTSQMTIITKKLDAELKKRYMTTKQTRTVQNQTMPRSNTTTKKRVLAIDFLADDDY</sequence>
<proteinExistence type="evidence at protein level"/>
<keyword id="KW-0158">Chromosome</keyword>
<keyword id="KW-0469">Meiosis</keyword>
<keyword id="KW-0539">Nucleus</keyword>
<keyword id="KW-1185">Reference proteome</keyword>
<feature type="chain" id="PRO_0000097222" description="Meiotic recombination protein rec15">
    <location>
        <begin position="1"/>
        <end position="180"/>
    </location>
</feature>
<dbReference type="EMBL" id="U09872">
    <property type="protein sequence ID" value="AAA98494.1"/>
    <property type="molecule type" value="Unassigned_DNA"/>
</dbReference>
<dbReference type="EMBL" id="CU329671">
    <property type="protein sequence ID" value="CAB88244.1"/>
    <property type="molecule type" value="Genomic_DNA"/>
</dbReference>
<dbReference type="PIR" id="S70725">
    <property type="entry name" value="S70725"/>
</dbReference>
<dbReference type="RefSeq" id="NP_595887.1">
    <property type="nucleotide sequence ID" value="NM_001021793.2"/>
</dbReference>
<dbReference type="SASBDB" id="Q09094"/>
<dbReference type="SMR" id="Q09094"/>
<dbReference type="BioGRID" id="276273">
    <property type="interactions" value="8"/>
</dbReference>
<dbReference type="FunCoup" id="Q09094">
    <property type="interactions" value="2"/>
</dbReference>
<dbReference type="STRING" id="284812.Q09094"/>
<dbReference type="PaxDb" id="4896-SPBC1711.14.1"/>
<dbReference type="EnsemblFungi" id="SPBC1711.14.1">
    <property type="protein sequence ID" value="SPBC1711.14.1:pep"/>
    <property type="gene ID" value="SPBC1711.14"/>
</dbReference>
<dbReference type="GeneID" id="2539720"/>
<dbReference type="KEGG" id="spo:2539720"/>
<dbReference type="PomBase" id="SPBC1711.14">
    <property type="gene designation" value="rec15"/>
</dbReference>
<dbReference type="VEuPathDB" id="FungiDB:SPBC1711.14"/>
<dbReference type="HOGENOM" id="CLU_1497079_0_0_1"/>
<dbReference type="InParanoid" id="Q09094"/>
<dbReference type="OMA" id="MQAEDMQ"/>
<dbReference type="PRO" id="PR:Q09094"/>
<dbReference type="Proteomes" id="UP000002485">
    <property type="component" value="Chromosome II"/>
</dbReference>
<dbReference type="GO" id="GO:0005694">
    <property type="term" value="C:chromosome"/>
    <property type="evidence" value="ECO:0007669"/>
    <property type="project" value="UniProtKB-SubCell"/>
</dbReference>
<dbReference type="GO" id="GO:0005634">
    <property type="term" value="C:nucleus"/>
    <property type="evidence" value="ECO:0007005"/>
    <property type="project" value="PomBase"/>
</dbReference>
<dbReference type="GO" id="GO:0007131">
    <property type="term" value="P:reciprocal meiotic recombination"/>
    <property type="evidence" value="ECO:0000315"/>
    <property type="project" value="PomBase"/>
</dbReference>
<organism>
    <name type="scientific">Schizosaccharomyces pombe (strain 972 / ATCC 24843)</name>
    <name type="common">Fission yeast</name>
    <dbReference type="NCBI Taxonomy" id="284812"/>
    <lineage>
        <taxon>Eukaryota</taxon>
        <taxon>Fungi</taxon>
        <taxon>Dikarya</taxon>
        <taxon>Ascomycota</taxon>
        <taxon>Taphrinomycotina</taxon>
        <taxon>Schizosaccharomycetes</taxon>
        <taxon>Schizosaccharomycetales</taxon>
        <taxon>Schizosaccharomycetaceae</taxon>
        <taxon>Schizosaccharomyces</taxon>
    </lineage>
</organism>
<name>REC15_SCHPO</name>
<gene>
    <name evidence="4" type="primary">rec15</name>
    <name evidence="5" type="ORF">SPBC1711.14</name>
</gene>
<evidence type="ECO:0000269" key="1">
    <source>
    </source>
</evidence>
<evidence type="ECO:0000269" key="2">
    <source>
    </source>
</evidence>
<evidence type="ECO:0000269" key="3">
    <source>
    </source>
</evidence>
<evidence type="ECO:0000303" key="4">
    <source>
    </source>
</evidence>
<evidence type="ECO:0000312" key="5">
    <source>
        <dbReference type="PomBase" id="SPBC1711.14"/>
    </source>
</evidence>
<reference key="1">
    <citation type="journal article" date="1995" name="Mol. Microbiol.">
        <title>An intron-containing meiosis-induced recombination gene, rec15, of Schizosaccharomyces pombe.</title>
        <authorList>
            <person name="Lin Y."/>
            <person name="Smith G.R."/>
        </authorList>
    </citation>
    <scope>NUCLEOTIDE SEQUENCE [GENOMIC DNA]</scope>
</reference>
<reference key="2">
    <citation type="journal article" date="2002" name="Nature">
        <title>The genome sequence of Schizosaccharomyces pombe.</title>
        <authorList>
            <person name="Wood V."/>
            <person name="Gwilliam R."/>
            <person name="Rajandream M.A."/>
            <person name="Lyne M.H."/>
            <person name="Lyne R."/>
            <person name="Stewart A."/>
            <person name="Sgouros J.G."/>
            <person name="Peat N."/>
            <person name="Hayles J."/>
            <person name="Baker S.G."/>
            <person name="Basham D."/>
            <person name="Bowman S."/>
            <person name="Brooks K."/>
            <person name="Brown D."/>
            <person name="Brown S."/>
            <person name="Chillingworth T."/>
            <person name="Churcher C.M."/>
            <person name="Collins M."/>
            <person name="Connor R."/>
            <person name="Cronin A."/>
            <person name="Davis P."/>
            <person name="Feltwell T."/>
            <person name="Fraser A."/>
            <person name="Gentles S."/>
            <person name="Goble A."/>
            <person name="Hamlin N."/>
            <person name="Harris D.E."/>
            <person name="Hidalgo J."/>
            <person name="Hodgson G."/>
            <person name="Holroyd S."/>
            <person name="Hornsby T."/>
            <person name="Howarth S."/>
            <person name="Huckle E.J."/>
            <person name="Hunt S."/>
            <person name="Jagels K."/>
            <person name="James K.D."/>
            <person name="Jones L."/>
            <person name="Jones M."/>
            <person name="Leather S."/>
            <person name="McDonald S."/>
            <person name="McLean J."/>
            <person name="Mooney P."/>
            <person name="Moule S."/>
            <person name="Mungall K.L."/>
            <person name="Murphy L.D."/>
            <person name="Niblett D."/>
            <person name="Odell C."/>
            <person name="Oliver K."/>
            <person name="O'Neil S."/>
            <person name="Pearson D."/>
            <person name="Quail M.A."/>
            <person name="Rabbinowitsch E."/>
            <person name="Rutherford K.M."/>
            <person name="Rutter S."/>
            <person name="Saunders D."/>
            <person name="Seeger K."/>
            <person name="Sharp S."/>
            <person name="Skelton J."/>
            <person name="Simmonds M.N."/>
            <person name="Squares R."/>
            <person name="Squares S."/>
            <person name="Stevens K."/>
            <person name="Taylor K."/>
            <person name="Taylor R.G."/>
            <person name="Tivey A."/>
            <person name="Walsh S.V."/>
            <person name="Warren T."/>
            <person name="Whitehead S."/>
            <person name="Woodward J.R."/>
            <person name="Volckaert G."/>
            <person name="Aert R."/>
            <person name="Robben J."/>
            <person name="Grymonprez B."/>
            <person name="Weltjens I."/>
            <person name="Vanstreels E."/>
            <person name="Rieger M."/>
            <person name="Schaefer M."/>
            <person name="Mueller-Auer S."/>
            <person name="Gabel C."/>
            <person name="Fuchs M."/>
            <person name="Duesterhoeft A."/>
            <person name="Fritzc C."/>
            <person name="Holzer E."/>
            <person name="Moestl D."/>
            <person name="Hilbert H."/>
            <person name="Borzym K."/>
            <person name="Langer I."/>
            <person name="Beck A."/>
            <person name="Lehrach H."/>
            <person name="Reinhardt R."/>
            <person name="Pohl T.M."/>
            <person name="Eger P."/>
            <person name="Zimmermann W."/>
            <person name="Wedler H."/>
            <person name="Wambutt R."/>
            <person name="Purnelle B."/>
            <person name="Goffeau A."/>
            <person name="Cadieu E."/>
            <person name="Dreano S."/>
            <person name="Gloux S."/>
            <person name="Lelaure V."/>
            <person name="Mottier S."/>
            <person name="Galibert F."/>
            <person name="Aves S.J."/>
            <person name="Xiang Z."/>
            <person name="Hunt C."/>
            <person name="Moore K."/>
            <person name="Hurst S.M."/>
            <person name="Lucas M."/>
            <person name="Rochet M."/>
            <person name="Gaillardin C."/>
            <person name="Tallada V.A."/>
            <person name="Garzon A."/>
            <person name="Thode G."/>
            <person name="Daga R.R."/>
            <person name="Cruzado L."/>
            <person name="Jimenez J."/>
            <person name="Sanchez M."/>
            <person name="del Rey F."/>
            <person name="Benito J."/>
            <person name="Dominguez A."/>
            <person name="Revuelta J.L."/>
            <person name="Moreno S."/>
            <person name="Armstrong J."/>
            <person name="Forsburg S.L."/>
            <person name="Cerutti L."/>
            <person name="Lowe T."/>
            <person name="McCombie W.R."/>
            <person name="Paulsen I."/>
            <person name="Potashkin J."/>
            <person name="Shpakovski G.V."/>
            <person name="Ussery D."/>
            <person name="Barrell B.G."/>
            <person name="Nurse P."/>
        </authorList>
    </citation>
    <scope>NUCLEOTIDE SEQUENCE [LARGE SCALE GENOMIC DNA]</scope>
    <source>
        <strain>972 / ATCC 24843</strain>
    </source>
</reference>
<reference key="3">
    <citation type="journal article" date="2005" name="Curr. Genet.">
        <title>Characterization of rec15, an early meiotic recombination gene in Schizosaccharomyces pombe.</title>
        <authorList>
            <person name="Doll E."/>
            <person name="Molnar M."/>
            <person name="Hiraoka Y."/>
            <person name="Kohli J."/>
        </authorList>
    </citation>
    <scope>FUNCTION</scope>
    <scope>SUBCELLULAR LOCATION</scope>
</reference>
<reference key="4">
    <citation type="journal article" date="2006" name="Nat. Biotechnol.">
        <title>ORFeome cloning and global analysis of protein localization in the fission yeast Schizosaccharomyces pombe.</title>
        <authorList>
            <person name="Matsuyama A."/>
            <person name="Arai R."/>
            <person name="Yashiroda Y."/>
            <person name="Shirai A."/>
            <person name="Kamata A."/>
            <person name="Sekido S."/>
            <person name="Kobayashi Y."/>
            <person name="Hashimoto A."/>
            <person name="Hamamoto M."/>
            <person name="Hiraoka Y."/>
            <person name="Horinouchi S."/>
            <person name="Yoshida M."/>
        </authorList>
    </citation>
    <scope>SUBCELLULAR LOCATION [LARGE SCALE ANALYSIS]</scope>
</reference>
<reference key="5">
    <citation type="journal article" date="2019" name="Nucleic Acids Res.">
        <title>Conserved HORMA domain-containing protein Hop1 stabilizes interaction between proteins of meiotic DNA break hotspots and chromosome axis.</title>
        <authorList>
            <person name="Kariyazono R."/>
            <person name="Oda A."/>
            <person name="Yamada T."/>
            <person name="Ohta K."/>
        </authorList>
    </citation>
    <scope>SUBUNIT</scope>
    <scope>INTERACTION WITH HOP1; REC10 AND MDE2</scope>
    <scope>SUBCELLULAR LOCATION</scope>
    <scope>DISRUPTION PHENOTYPE</scope>
</reference>
<accession>Q09094</accession>